<keyword id="KW-0002">3D-structure</keyword>
<keyword id="KW-0028">Amino-acid biosynthesis</keyword>
<keyword id="KW-0368">Histidine biosynthesis</keyword>
<keyword id="KW-0378">Hydrolase</keyword>
<keyword id="KW-0486">Methionine biosynthesis</keyword>
<keyword id="KW-0511">Multifunctional enzyme</keyword>
<keyword id="KW-0521">NADP</keyword>
<keyword id="KW-0554">One-carbon metabolism</keyword>
<keyword id="KW-0560">Oxidoreductase</keyword>
<keyword id="KW-0658">Purine biosynthesis</keyword>
<keyword id="KW-1185">Reference proteome</keyword>
<sequence>MTAQLIDGKAIAANLRQQIAQRVTERRQQGLRVPGLAVILVGTDPASQVYVAHKRKDCEEVGFLSQAYDLPAETSQDDLLALIDRLNDDPAIDGILVQLPLPAHLDASLLLERIHPDKDVDGFHPYNIGRLAQRMPLLRPCTPKGIMTLLASTGADLYGMDAVVVGASNIVGRPMALELLLGGCTVTVTHRFTRDLADHVSRADLVVVAAGKPGLVKGEWIKEGAIVIDVGINRQADGRLVGDVEYEVAAQRASWITPVPGGVGPMTRACLLENTLHAAEHLHD</sequence>
<accession>Q9I2U6</accession>
<gene>
    <name evidence="1" type="primary">folD</name>
    <name type="ordered locus">PA1796</name>
</gene>
<reference key="1">
    <citation type="journal article" date="2000" name="Nature">
        <title>Complete genome sequence of Pseudomonas aeruginosa PAO1, an opportunistic pathogen.</title>
        <authorList>
            <person name="Stover C.K."/>
            <person name="Pham X.-Q.T."/>
            <person name="Erwin A.L."/>
            <person name="Mizoguchi S.D."/>
            <person name="Warrener P."/>
            <person name="Hickey M.J."/>
            <person name="Brinkman F.S.L."/>
            <person name="Hufnagle W.O."/>
            <person name="Kowalik D.J."/>
            <person name="Lagrou M."/>
            <person name="Garber R.L."/>
            <person name="Goltry L."/>
            <person name="Tolentino E."/>
            <person name="Westbrock-Wadman S."/>
            <person name="Yuan Y."/>
            <person name="Brody L.L."/>
            <person name="Coulter S.N."/>
            <person name="Folger K.R."/>
            <person name="Kas A."/>
            <person name="Larbig K."/>
            <person name="Lim R.M."/>
            <person name="Smith K.A."/>
            <person name="Spencer D.H."/>
            <person name="Wong G.K.-S."/>
            <person name="Wu Z."/>
            <person name="Paulsen I.T."/>
            <person name="Reizer J."/>
            <person name="Saier M.H. Jr."/>
            <person name="Hancock R.E.W."/>
            <person name="Lory S."/>
            <person name="Olson M.V."/>
        </authorList>
    </citation>
    <scope>NUCLEOTIDE SEQUENCE [LARGE SCALE GENOMIC DNA]</scope>
    <source>
        <strain>ATCC 15692 / DSM 22644 / CIP 104116 / JCM 14847 / LMG 12228 / 1C / PRS 101 / PAO1</strain>
    </source>
</reference>
<reference key="2">
    <citation type="journal article" date="2012" name="PLoS ONE">
        <title>Assessment of Pseudomonas aeruginosa N5,N10-methylenetetrahydrofolate dehydrogenase-cyclohydrolase as a potential antibacterial drug target.</title>
        <authorList>
            <person name="Eadsforth T.C."/>
            <person name="Gardiner M."/>
            <person name="Maluf F.V."/>
            <person name="McElroy S."/>
            <person name="James D."/>
            <person name="Frearson J."/>
            <person name="Gray D."/>
            <person name="Hunter W.N."/>
        </authorList>
    </citation>
    <scope>X-RAY CRYSTALLOGRAPHY (2.2 ANGSTROMS)</scope>
    <scope>FUNCTION</scope>
    <scope>CATALYTIC ACTIVITY</scope>
    <scope>SUBUNIT</scope>
</reference>
<feature type="chain" id="PRO_0000268443" description="Bifunctional protein FolD">
    <location>
        <begin position="1"/>
        <end position="284"/>
    </location>
</feature>
<feature type="binding site" evidence="1">
    <location>
        <begin position="166"/>
        <end position="168"/>
    </location>
    <ligand>
        <name>NADP(+)</name>
        <dbReference type="ChEBI" id="CHEBI:58349"/>
    </ligand>
</feature>
<feature type="binding site" evidence="1">
    <location>
        <position position="232"/>
    </location>
    <ligand>
        <name>NADP(+)</name>
        <dbReference type="ChEBI" id="CHEBI:58349"/>
    </ligand>
</feature>
<feature type="helix" evidence="3">
    <location>
        <begin position="8"/>
        <end position="28"/>
    </location>
</feature>
<feature type="strand" evidence="3">
    <location>
        <begin position="35"/>
        <end position="42"/>
    </location>
</feature>
<feature type="helix" evidence="3">
    <location>
        <begin position="45"/>
        <end position="60"/>
    </location>
</feature>
<feature type="strand" evidence="3">
    <location>
        <begin position="64"/>
        <end position="70"/>
    </location>
</feature>
<feature type="helix" evidence="3">
    <location>
        <begin position="76"/>
        <end position="87"/>
    </location>
</feature>
<feature type="strand" evidence="3">
    <location>
        <begin position="94"/>
        <end position="97"/>
    </location>
</feature>
<feature type="helix" evidence="3">
    <location>
        <begin position="107"/>
        <end position="112"/>
    </location>
</feature>
<feature type="helix" evidence="3">
    <location>
        <begin position="116"/>
        <end position="118"/>
    </location>
</feature>
<feature type="helix" evidence="3">
    <location>
        <begin position="125"/>
        <end position="132"/>
    </location>
</feature>
<feature type="helix" evidence="3">
    <location>
        <begin position="141"/>
        <end position="152"/>
    </location>
</feature>
<feature type="strand" evidence="3">
    <location>
        <begin position="161"/>
        <end position="165"/>
    </location>
</feature>
<feature type="helix" evidence="3">
    <location>
        <begin position="172"/>
        <end position="181"/>
    </location>
</feature>
<feature type="strand" evidence="3">
    <location>
        <begin position="185"/>
        <end position="189"/>
    </location>
</feature>
<feature type="helix" evidence="3">
    <location>
        <begin position="196"/>
        <end position="201"/>
    </location>
</feature>
<feature type="strand" evidence="3">
    <location>
        <begin position="204"/>
        <end position="208"/>
    </location>
</feature>
<feature type="helix" evidence="3">
    <location>
        <begin position="218"/>
        <end position="220"/>
    </location>
</feature>
<feature type="strand" evidence="3">
    <location>
        <begin position="226"/>
        <end position="229"/>
    </location>
</feature>
<feature type="helix" evidence="3">
    <location>
        <begin position="246"/>
        <end position="252"/>
    </location>
</feature>
<feature type="strand" evidence="3">
    <location>
        <begin position="254"/>
        <end position="256"/>
    </location>
</feature>
<feature type="helix" evidence="3">
    <location>
        <begin position="263"/>
        <end position="281"/>
    </location>
</feature>
<proteinExistence type="evidence at protein level"/>
<evidence type="ECO:0000255" key="1">
    <source>
        <dbReference type="HAMAP-Rule" id="MF_01576"/>
    </source>
</evidence>
<evidence type="ECO:0000269" key="2">
    <source>
    </source>
</evidence>
<evidence type="ECO:0007829" key="3">
    <source>
        <dbReference type="PDB" id="4A5O"/>
    </source>
</evidence>
<dbReference type="EC" id="1.5.1.5" evidence="1"/>
<dbReference type="EC" id="3.5.4.9" evidence="1"/>
<dbReference type="EMBL" id="AE004091">
    <property type="protein sequence ID" value="AAG05185.1"/>
    <property type="molecule type" value="Genomic_DNA"/>
</dbReference>
<dbReference type="PIR" id="H83421">
    <property type="entry name" value="H83421"/>
</dbReference>
<dbReference type="RefSeq" id="NP_250487.1">
    <property type="nucleotide sequence ID" value="NC_002516.2"/>
</dbReference>
<dbReference type="RefSeq" id="WP_003087898.1">
    <property type="nucleotide sequence ID" value="NZ_QZGE01000003.1"/>
</dbReference>
<dbReference type="PDB" id="4A5O">
    <property type="method" value="X-ray"/>
    <property type="resolution" value="2.20 A"/>
    <property type="chains" value="A/B/C/D=1-284"/>
</dbReference>
<dbReference type="PDBsum" id="4A5O"/>
<dbReference type="SMR" id="Q9I2U6"/>
<dbReference type="FunCoup" id="Q9I2U6">
    <property type="interactions" value="649"/>
</dbReference>
<dbReference type="STRING" id="208964.PA1796"/>
<dbReference type="PaxDb" id="208964-PA1796"/>
<dbReference type="GeneID" id="880636"/>
<dbReference type="KEGG" id="pae:PA1796"/>
<dbReference type="PATRIC" id="fig|208964.12.peg.1863"/>
<dbReference type="PseudoCAP" id="PA1796"/>
<dbReference type="HOGENOM" id="CLU_034045_2_1_6"/>
<dbReference type="InParanoid" id="Q9I2U6"/>
<dbReference type="OrthoDB" id="9803580at2"/>
<dbReference type="PhylomeDB" id="Q9I2U6"/>
<dbReference type="BioCyc" id="PAER208964:G1FZ6-1828-MONOMER"/>
<dbReference type="BRENDA" id="3.5.4.9">
    <property type="organism ID" value="5087"/>
</dbReference>
<dbReference type="UniPathway" id="UPA00193"/>
<dbReference type="EvolutionaryTrace" id="Q9I2U6"/>
<dbReference type="Proteomes" id="UP000002438">
    <property type="component" value="Chromosome"/>
</dbReference>
<dbReference type="GO" id="GO:0005829">
    <property type="term" value="C:cytosol"/>
    <property type="evidence" value="ECO:0000318"/>
    <property type="project" value="GO_Central"/>
</dbReference>
<dbReference type="GO" id="GO:0004477">
    <property type="term" value="F:methenyltetrahydrofolate cyclohydrolase activity"/>
    <property type="evidence" value="ECO:0000318"/>
    <property type="project" value="GO_Central"/>
</dbReference>
<dbReference type="GO" id="GO:0004488">
    <property type="term" value="F:methylenetetrahydrofolate dehydrogenase (NADP+) activity"/>
    <property type="evidence" value="ECO:0000318"/>
    <property type="project" value="GO_Central"/>
</dbReference>
<dbReference type="GO" id="GO:0000105">
    <property type="term" value="P:L-histidine biosynthetic process"/>
    <property type="evidence" value="ECO:0007669"/>
    <property type="project" value="UniProtKB-KW"/>
</dbReference>
<dbReference type="GO" id="GO:0009086">
    <property type="term" value="P:methionine biosynthetic process"/>
    <property type="evidence" value="ECO:0007669"/>
    <property type="project" value="UniProtKB-KW"/>
</dbReference>
<dbReference type="GO" id="GO:0006164">
    <property type="term" value="P:purine nucleotide biosynthetic process"/>
    <property type="evidence" value="ECO:0007669"/>
    <property type="project" value="UniProtKB-KW"/>
</dbReference>
<dbReference type="GO" id="GO:0035999">
    <property type="term" value="P:tetrahydrofolate interconversion"/>
    <property type="evidence" value="ECO:0000318"/>
    <property type="project" value="GO_Central"/>
</dbReference>
<dbReference type="CDD" id="cd01080">
    <property type="entry name" value="NAD_bind_m-THF_DH_Cyclohyd"/>
    <property type="match status" value="1"/>
</dbReference>
<dbReference type="FunFam" id="3.40.50.10860:FF:000001">
    <property type="entry name" value="Bifunctional protein FolD"/>
    <property type="match status" value="1"/>
</dbReference>
<dbReference type="FunFam" id="3.40.50.720:FF:000006">
    <property type="entry name" value="Bifunctional protein FolD"/>
    <property type="match status" value="1"/>
</dbReference>
<dbReference type="Gene3D" id="3.40.50.10860">
    <property type="entry name" value="Leucine Dehydrogenase, chain A, domain 1"/>
    <property type="match status" value="1"/>
</dbReference>
<dbReference type="Gene3D" id="3.40.50.720">
    <property type="entry name" value="NAD(P)-binding Rossmann-like Domain"/>
    <property type="match status" value="1"/>
</dbReference>
<dbReference type="HAMAP" id="MF_01576">
    <property type="entry name" value="THF_DHG_CYH"/>
    <property type="match status" value="1"/>
</dbReference>
<dbReference type="InterPro" id="IPR046346">
    <property type="entry name" value="Aminoacid_DH-like_N_sf"/>
</dbReference>
<dbReference type="InterPro" id="IPR036291">
    <property type="entry name" value="NAD(P)-bd_dom_sf"/>
</dbReference>
<dbReference type="InterPro" id="IPR000672">
    <property type="entry name" value="THF_DH/CycHdrlase"/>
</dbReference>
<dbReference type="InterPro" id="IPR020630">
    <property type="entry name" value="THF_DH/CycHdrlase_cat_dom"/>
</dbReference>
<dbReference type="InterPro" id="IPR020867">
    <property type="entry name" value="THF_DH/CycHdrlase_CS"/>
</dbReference>
<dbReference type="InterPro" id="IPR020631">
    <property type="entry name" value="THF_DH/CycHdrlase_NAD-bd_dom"/>
</dbReference>
<dbReference type="NCBIfam" id="NF008058">
    <property type="entry name" value="PRK10792.1"/>
    <property type="match status" value="1"/>
</dbReference>
<dbReference type="NCBIfam" id="NF010783">
    <property type="entry name" value="PRK14186.1"/>
    <property type="match status" value="1"/>
</dbReference>
<dbReference type="PANTHER" id="PTHR48099:SF5">
    <property type="entry name" value="C-1-TETRAHYDROFOLATE SYNTHASE, CYTOPLASMIC"/>
    <property type="match status" value="1"/>
</dbReference>
<dbReference type="PANTHER" id="PTHR48099">
    <property type="entry name" value="C-1-TETRAHYDROFOLATE SYNTHASE, CYTOPLASMIC-RELATED"/>
    <property type="match status" value="1"/>
</dbReference>
<dbReference type="Pfam" id="PF00763">
    <property type="entry name" value="THF_DHG_CYH"/>
    <property type="match status" value="1"/>
</dbReference>
<dbReference type="Pfam" id="PF02882">
    <property type="entry name" value="THF_DHG_CYH_C"/>
    <property type="match status" value="1"/>
</dbReference>
<dbReference type="PRINTS" id="PR00085">
    <property type="entry name" value="THFDHDRGNASE"/>
</dbReference>
<dbReference type="SUPFAM" id="SSF53223">
    <property type="entry name" value="Aminoacid dehydrogenase-like, N-terminal domain"/>
    <property type="match status" value="1"/>
</dbReference>
<dbReference type="SUPFAM" id="SSF51735">
    <property type="entry name" value="NAD(P)-binding Rossmann-fold domains"/>
    <property type="match status" value="1"/>
</dbReference>
<dbReference type="PROSITE" id="PS00766">
    <property type="entry name" value="THF_DHG_CYH_1"/>
    <property type="match status" value="1"/>
</dbReference>
<organism>
    <name type="scientific">Pseudomonas aeruginosa (strain ATCC 15692 / DSM 22644 / CIP 104116 / JCM 14847 / LMG 12228 / 1C / PRS 101 / PAO1)</name>
    <dbReference type="NCBI Taxonomy" id="208964"/>
    <lineage>
        <taxon>Bacteria</taxon>
        <taxon>Pseudomonadati</taxon>
        <taxon>Pseudomonadota</taxon>
        <taxon>Gammaproteobacteria</taxon>
        <taxon>Pseudomonadales</taxon>
        <taxon>Pseudomonadaceae</taxon>
        <taxon>Pseudomonas</taxon>
    </lineage>
</organism>
<protein>
    <recommendedName>
        <fullName evidence="1">Bifunctional protein FolD</fullName>
    </recommendedName>
    <domain>
        <recommendedName>
            <fullName evidence="1">Methylenetetrahydrofolate dehydrogenase</fullName>
            <ecNumber evidence="1">1.5.1.5</ecNumber>
        </recommendedName>
    </domain>
    <domain>
        <recommendedName>
            <fullName evidence="1">Methenyltetrahydrofolate cyclohydrolase</fullName>
            <ecNumber evidence="1">3.5.4.9</ecNumber>
        </recommendedName>
    </domain>
</protein>
<name>FOLD_PSEAE</name>
<comment type="function">
    <text evidence="1 2">Catalyzes the oxidation of 5,10-methylenetetrahydrofolate to 5,10-methenyltetrahydrofolate and then the hydrolysis of 5,10-methenyltetrahydrofolate to 10-formyltetrahydrofolate.</text>
</comment>
<comment type="catalytic activity">
    <reaction evidence="1 2">
        <text>(6R)-5,10-methylene-5,6,7,8-tetrahydrofolate + NADP(+) = (6R)-5,10-methenyltetrahydrofolate + NADPH</text>
        <dbReference type="Rhea" id="RHEA:22812"/>
        <dbReference type="ChEBI" id="CHEBI:15636"/>
        <dbReference type="ChEBI" id="CHEBI:57455"/>
        <dbReference type="ChEBI" id="CHEBI:57783"/>
        <dbReference type="ChEBI" id="CHEBI:58349"/>
        <dbReference type="EC" id="1.5.1.5"/>
    </reaction>
</comment>
<comment type="catalytic activity">
    <reaction evidence="1 2">
        <text>(6R)-5,10-methenyltetrahydrofolate + H2O = (6R)-10-formyltetrahydrofolate + H(+)</text>
        <dbReference type="Rhea" id="RHEA:23700"/>
        <dbReference type="ChEBI" id="CHEBI:15377"/>
        <dbReference type="ChEBI" id="CHEBI:15378"/>
        <dbReference type="ChEBI" id="CHEBI:57455"/>
        <dbReference type="ChEBI" id="CHEBI:195366"/>
        <dbReference type="EC" id="3.5.4.9"/>
    </reaction>
</comment>
<comment type="pathway">
    <text evidence="1">One-carbon metabolism; tetrahydrofolate interconversion.</text>
</comment>
<comment type="subunit">
    <text evidence="1 2">Homodimer.</text>
</comment>
<comment type="similarity">
    <text evidence="1">Belongs to the tetrahydrofolate dehydrogenase/cyclohydrolase family.</text>
</comment>